<protein>
    <recommendedName>
        <fullName evidence="1">Isoleucine--tRNA ligase</fullName>
        <ecNumber evidence="1">6.1.1.5</ecNumber>
    </recommendedName>
    <alternativeName>
        <fullName evidence="1">Isoleucyl-tRNA synthetase</fullName>
        <shortName evidence="1">IleRS</shortName>
    </alternativeName>
</protein>
<reference key="1">
    <citation type="journal article" date="2004" name="Nature">
        <title>Genome sequence of Silicibacter pomeroyi reveals adaptations to the marine environment.</title>
        <authorList>
            <person name="Moran M.A."/>
            <person name="Buchan A."/>
            <person name="Gonzalez J.M."/>
            <person name="Heidelberg J.F."/>
            <person name="Whitman W.B."/>
            <person name="Kiene R.P."/>
            <person name="Henriksen J.R."/>
            <person name="King G.M."/>
            <person name="Belas R."/>
            <person name="Fuqua C."/>
            <person name="Brinkac L.M."/>
            <person name="Lewis M."/>
            <person name="Johri S."/>
            <person name="Weaver B."/>
            <person name="Pai G."/>
            <person name="Eisen J.A."/>
            <person name="Rahe E."/>
            <person name="Sheldon W.M."/>
            <person name="Ye W."/>
            <person name="Miller T.R."/>
            <person name="Carlton J."/>
            <person name="Rasko D.A."/>
            <person name="Paulsen I.T."/>
            <person name="Ren Q."/>
            <person name="Daugherty S.C."/>
            <person name="DeBoy R.T."/>
            <person name="Dodson R.J."/>
            <person name="Durkin A.S."/>
            <person name="Madupu R."/>
            <person name="Nelson W.C."/>
            <person name="Sullivan S.A."/>
            <person name="Rosovitz M.J."/>
            <person name="Haft D.H."/>
            <person name="Selengut J."/>
            <person name="Ward N."/>
        </authorList>
    </citation>
    <scope>NUCLEOTIDE SEQUENCE [LARGE SCALE GENOMIC DNA]</scope>
    <source>
        <strain>ATCC 700808 / DSM 15171 / DSS-3</strain>
    </source>
</reference>
<reference key="2">
    <citation type="journal article" date="2014" name="Stand. Genomic Sci.">
        <title>An updated genome annotation for the model marine bacterium Ruegeria pomeroyi DSS-3.</title>
        <authorList>
            <person name="Rivers A.R."/>
            <person name="Smith C.B."/>
            <person name="Moran M.A."/>
        </authorList>
    </citation>
    <scope>GENOME REANNOTATION</scope>
    <source>
        <strain>ATCC 700808 / DSM 15171 / DSS-3</strain>
    </source>
</reference>
<keyword id="KW-0030">Aminoacyl-tRNA synthetase</keyword>
<keyword id="KW-0067">ATP-binding</keyword>
<keyword id="KW-0963">Cytoplasm</keyword>
<keyword id="KW-0436">Ligase</keyword>
<keyword id="KW-0479">Metal-binding</keyword>
<keyword id="KW-0547">Nucleotide-binding</keyword>
<keyword id="KW-0648">Protein biosynthesis</keyword>
<keyword id="KW-1185">Reference proteome</keyword>
<keyword id="KW-0862">Zinc</keyword>
<gene>
    <name evidence="1" type="primary">ileS</name>
    <name type="ordered locus">SPO3136</name>
</gene>
<organism>
    <name type="scientific">Ruegeria pomeroyi (strain ATCC 700808 / DSM 15171 / DSS-3)</name>
    <name type="common">Silicibacter pomeroyi</name>
    <dbReference type="NCBI Taxonomy" id="246200"/>
    <lineage>
        <taxon>Bacteria</taxon>
        <taxon>Pseudomonadati</taxon>
        <taxon>Pseudomonadota</taxon>
        <taxon>Alphaproteobacteria</taxon>
        <taxon>Rhodobacterales</taxon>
        <taxon>Roseobacteraceae</taxon>
        <taxon>Ruegeria</taxon>
    </lineage>
</organism>
<name>SYI_RUEPO</name>
<dbReference type="EC" id="6.1.1.5" evidence="1"/>
<dbReference type="EMBL" id="CP000031">
    <property type="protein sequence ID" value="AAV96371.1"/>
    <property type="molecule type" value="Genomic_DNA"/>
</dbReference>
<dbReference type="RefSeq" id="WP_011048826.1">
    <property type="nucleotide sequence ID" value="NC_003911.12"/>
</dbReference>
<dbReference type="SMR" id="Q5LNR7"/>
<dbReference type="STRING" id="246200.SPO3136"/>
<dbReference type="PaxDb" id="246200-SPO3136"/>
<dbReference type="KEGG" id="sil:SPO3136"/>
<dbReference type="eggNOG" id="COG0060">
    <property type="taxonomic scope" value="Bacteria"/>
</dbReference>
<dbReference type="HOGENOM" id="CLU_001493_7_0_5"/>
<dbReference type="OrthoDB" id="9810365at2"/>
<dbReference type="Proteomes" id="UP000001023">
    <property type="component" value="Chromosome"/>
</dbReference>
<dbReference type="GO" id="GO:0005829">
    <property type="term" value="C:cytosol"/>
    <property type="evidence" value="ECO:0007669"/>
    <property type="project" value="TreeGrafter"/>
</dbReference>
<dbReference type="GO" id="GO:0002161">
    <property type="term" value="F:aminoacyl-tRNA deacylase activity"/>
    <property type="evidence" value="ECO:0007669"/>
    <property type="project" value="InterPro"/>
</dbReference>
<dbReference type="GO" id="GO:0005524">
    <property type="term" value="F:ATP binding"/>
    <property type="evidence" value="ECO:0007669"/>
    <property type="project" value="UniProtKB-UniRule"/>
</dbReference>
<dbReference type="GO" id="GO:0004822">
    <property type="term" value="F:isoleucine-tRNA ligase activity"/>
    <property type="evidence" value="ECO:0007669"/>
    <property type="project" value="UniProtKB-UniRule"/>
</dbReference>
<dbReference type="GO" id="GO:0000049">
    <property type="term" value="F:tRNA binding"/>
    <property type="evidence" value="ECO:0007669"/>
    <property type="project" value="InterPro"/>
</dbReference>
<dbReference type="GO" id="GO:0008270">
    <property type="term" value="F:zinc ion binding"/>
    <property type="evidence" value="ECO:0007669"/>
    <property type="project" value="UniProtKB-UniRule"/>
</dbReference>
<dbReference type="GO" id="GO:0006428">
    <property type="term" value="P:isoleucyl-tRNA aminoacylation"/>
    <property type="evidence" value="ECO:0007669"/>
    <property type="project" value="UniProtKB-UniRule"/>
</dbReference>
<dbReference type="CDD" id="cd07960">
    <property type="entry name" value="Anticodon_Ia_Ile_BEm"/>
    <property type="match status" value="1"/>
</dbReference>
<dbReference type="CDD" id="cd00818">
    <property type="entry name" value="IleRS_core"/>
    <property type="match status" value="1"/>
</dbReference>
<dbReference type="FunFam" id="3.40.50.620:FF:000042">
    <property type="entry name" value="Isoleucine--tRNA ligase"/>
    <property type="match status" value="1"/>
</dbReference>
<dbReference type="Gene3D" id="1.10.730.20">
    <property type="match status" value="1"/>
</dbReference>
<dbReference type="Gene3D" id="3.40.50.620">
    <property type="entry name" value="HUPs"/>
    <property type="match status" value="2"/>
</dbReference>
<dbReference type="HAMAP" id="MF_02002">
    <property type="entry name" value="Ile_tRNA_synth_type1"/>
    <property type="match status" value="1"/>
</dbReference>
<dbReference type="InterPro" id="IPR001412">
    <property type="entry name" value="aa-tRNA-synth_I_CS"/>
</dbReference>
<dbReference type="InterPro" id="IPR002300">
    <property type="entry name" value="aa-tRNA-synth_Ia"/>
</dbReference>
<dbReference type="InterPro" id="IPR033708">
    <property type="entry name" value="Anticodon_Ile_BEm"/>
</dbReference>
<dbReference type="InterPro" id="IPR002301">
    <property type="entry name" value="Ile-tRNA-ligase"/>
</dbReference>
<dbReference type="InterPro" id="IPR023585">
    <property type="entry name" value="Ile-tRNA-ligase_type1"/>
</dbReference>
<dbReference type="InterPro" id="IPR050081">
    <property type="entry name" value="Ile-tRNA_ligase"/>
</dbReference>
<dbReference type="InterPro" id="IPR013155">
    <property type="entry name" value="M/V/L/I-tRNA-synth_anticd-bd"/>
</dbReference>
<dbReference type="InterPro" id="IPR014729">
    <property type="entry name" value="Rossmann-like_a/b/a_fold"/>
</dbReference>
<dbReference type="InterPro" id="IPR009080">
    <property type="entry name" value="tRNAsynth_Ia_anticodon-bd"/>
</dbReference>
<dbReference type="InterPro" id="IPR009008">
    <property type="entry name" value="Val/Leu/Ile-tRNA-synth_edit"/>
</dbReference>
<dbReference type="InterPro" id="IPR010663">
    <property type="entry name" value="Znf_FPG/IleRS"/>
</dbReference>
<dbReference type="NCBIfam" id="TIGR00392">
    <property type="entry name" value="ileS"/>
    <property type="match status" value="1"/>
</dbReference>
<dbReference type="PANTHER" id="PTHR42765:SF1">
    <property type="entry name" value="ISOLEUCINE--TRNA LIGASE, MITOCHONDRIAL"/>
    <property type="match status" value="1"/>
</dbReference>
<dbReference type="PANTHER" id="PTHR42765">
    <property type="entry name" value="SOLEUCYL-TRNA SYNTHETASE"/>
    <property type="match status" value="1"/>
</dbReference>
<dbReference type="Pfam" id="PF08264">
    <property type="entry name" value="Anticodon_1"/>
    <property type="match status" value="1"/>
</dbReference>
<dbReference type="Pfam" id="PF00133">
    <property type="entry name" value="tRNA-synt_1"/>
    <property type="match status" value="1"/>
</dbReference>
<dbReference type="Pfam" id="PF06827">
    <property type="entry name" value="zf-FPG_IleRS"/>
    <property type="match status" value="1"/>
</dbReference>
<dbReference type="PRINTS" id="PR00984">
    <property type="entry name" value="TRNASYNTHILE"/>
</dbReference>
<dbReference type="SUPFAM" id="SSF47323">
    <property type="entry name" value="Anticodon-binding domain of a subclass of class I aminoacyl-tRNA synthetases"/>
    <property type="match status" value="1"/>
</dbReference>
<dbReference type="SUPFAM" id="SSF52374">
    <property type="entry name" value="Nucleotidylyl transferase"/>
    <property type="match status" value="1"/>
</dbReference>
<dbReference type="SUPFAM" id="SSF50677">
    <property type="entry name" value="ValRS/IleRS/LeuRS editing domain"/>
    <property type="match status" value="1"/>
</dbReference>
<dbReference type="PROSITE" id="PS00178">
    <property type="entry name" value="AA_TRNA_LIGASE_I"/>
    <property type="match status" value="1"/>
</dbReference>
<evidence type="ECO:0000255" key="1">
    <source>
        <dbReference type="HAMAP-Rule" id="MF_02002"/>
    </source>
</evidence>
<sequence length="970" mass="109796">MCADTTAETPEYKDTLNLPKTDFPMRAGLPAREPQWLERWEKIGVYDRLREKQGRAPFTLHDGPPYANGHLHIGHALNKTIKDMIVRSHQMMGFDARYVPGWDCHGLPIEWKIEEQYRKKGKSKDDVNVVEFRQECRRFAEGWIDIQREEFKRLGITGNWADPYVTMDYHAEAVIADEFMKFLMNGTLYQGSKPVMWSPIEQTALAEAEVEYHDKESFTIWVKFRAVNSGDLDGAQVVIWTTTPWTIPSNKAVVYGKDIAYGLYEITGTPEECWASVGDKYILADKLADDVMRRARLDPDMYRRVGDVDPSQIGGLTHPLHGAEGGNGEWDDIRDFRAAEFVTDTEGTGFVHCAPSHGMEEFELYRDLGMLEQVITYNVMDDGSFRADLPFFGGKYILSRKGGEGDANKTVIDKLVEVGGLLARGKIKHSYPHSWRSKAPIIYRNTPQWFASVDRPVNDGQDSYGKTIRERALTSIDQLVKFTPQTGRNRLYSMIEARPDWVLSRQRAWGVPLTCFTRKGALPTDADFLLRDPAVNARIFAAFEAEGADCWYAEGAKERFLGNDYKADEWDQVFDVLDVWFDSGSTHAFVLRDREDGTADGIADVYMEGTDQHRGWFHSSLLQACGTLGRAPYRNVVTHGFTLDEKGMKMSKSLGNTIVPDEVVKQYGADILRLWVAQTDYTADQRIGPEILKGVADSYRRLRNTMRFMLGSLSDFTEADRIEDPAEMPPLERWVLSRMAELDEQVRKGYAGFDFQGVYSAVFNFATVDLSAFYFDIRKDVLYCDGDTTRRRAARTVLDLLFHRLTTWLAPILVFTMEEVWLERYPGEGSSVHLVDFPETPASWRNPQNESNVARVRRVRRVVTAALEIQRRDKVIGSSLEAAPVVHVEDAETRALLAQIDIDDLCITSGLTVSADPAPAEAFRLPEIEGVGVVFEMAEGEKCQRCWKILPDVGRHAHAGVCGRCDAALG</sequence>
<feature type="chain" id="PRO_0000098462" description="Isoleucine--tRNA ligase">
    <location>
        <begin position="1"/>
        <end position="970"/>
    </location>
</feature>
<feature type="short sequence motif" description="'HIGH' region">
    <location>
        <begin position="65"/>
        <end position="75"/>
    </location>
</feature>
<feature type="short sequence motif" description="'KMSKS' region">
    <location>
        <begin position="649"/>
        <end position="653"/>
    </location>
</feature>
<feature type="binding site" evidence="1">
    <location>
        <position position="608"/>
    </location>
    <ligand>
        <name>L-isoleucyl-5'-AMP</name>
        <dbReference type="ChEBI" id="CHEBI:178002"/>
    </ligand>
</feature>
<feature type="binding site" evidence="1">
    <location>
        <position position="652"/>
    </location>
    <ligand>
        <name>ATP</name>
        <dbReference type="ChEBI" id="CHEBI:30616"/>
    </ligand>
</feature>
<feature type="binding site" evidence="1">
    <location>
        <position position="943"/>
    </location>
    <ligand>
        <name>Zn(2+)</name>
        <dbReference type="ChEBI" id="CHEBI:29105"/>
    </ligand>
</feature>
<feature type="binding site" evidence="1">
    <location>
        <position position="946"/>
    </location>
    <ligand>
        <name>Zn(2+)</name>
        <dbReference type="ChEBI" id="CHEBI:29105"/>
    </ligand>
</feature>
<feature type="binding site" evidence="1">
    <location>
        <position position="962"/>
    </location>
    <ligand>
        <name>Zn(2+)</name>
        <dbReference type="ChEBI" id="CHEBI:29105"/>
    </ligand>
</feature>
<feature type="binding site" evidence="1">
    <location>
        <position position="965"/>
    </location>
    <ligand>
        <name>Zn(2+)</name>
        <dbReference type="ChEBI" id="CHEBI:29105"/>
    </ligand>
</feature>
<comment type="function">
    <text evidence="1">Catalyzes the attachment of isoleucine to tRNA(Ile). As IleRS can inadvertently accommodate and process structurally similar amino acids such as valine, to avoid such errors it has two additional distinct tRNA(Ile)-dependent editing activities. One activity is designated as 'pretransfer' editing and involves the hydrolysis of activated Val-AMP. The other activity is designated 'posttransfer' editing and involves deacylation of mischarged Val-tRNA(Ile).</text>
</comment>
<comment type="catalytic activity">
    <reaction evidence="1">
        <text>tRNA(Ile) + L-isoleucine + ATP = L-isoleucyl-tRNA(Ile) + AMP + diphosphate</text>
        <dbReference type="Rhea" id="RHEA:11060"/>
        <dbReference type="Rhea" id="RHEA-COMP:9666"/>
        <dbReference type="Rhea" id="RHEA-COMP:9695"/>
        <dbReference type="ChEBI" id="CHEBI:30616"/>
        <dbReference type="ChEBI" id="CHEBI:33019"/>
        <dbReference type="ChEBI" id="CHEBI:58045"/>
        <dbReference type="ChEBI" id="CHEBI:78442"/>
        <dbReference type="ChEBI" id="CHEBI:78528"/>
        <dbReference type="ChEBI" id="CHEBI:456215"/>
        <dbReference type="EC" id="6.1.1.5"/>
    </reaction>
</comment>
<comment type="cofactor">
    <cofactor evidence="1">
        <name>Zn(2+)</name>
        <dbReference type="ChEBI" id="CHEBI:29105"/>
    </cofactor>
    <text evidence="1">Binds 1 zinc ion per subunit.</text>
</comment>
<comment type="subunit">
    <text evidence="1">Monomer.</text>
</comment>
<comment type="subcellular location">
    <subcellularLocation>
        <location evidence="1">Cytoplasm</location>
    </subcellularLocation>
</comment>
<comment type="domain">
    <text evidence="1">IleRS has two distinct active sites: one for aminoacylation and one for editing. The misactivated valine is translocated from the active site to the editing site, which sterically excludes the correctly activated isoleucine. The single editing site contains two valyl binding pockets, one specific for each substrate (Val-AMP or Val-tRNA(Ile)).</text>
</comment>
<comment type="similarity">
    <text evidence="1">Belongs to the class-I aminoacyl-tRNA synthetase family. IleS type 1 subfamily.</text>
</comment>
<accession>Q5LNR7</accession>
<proteinExistence type="inferred from homology"/>